<feature type="chain" id="PRO_0000255070" description="Cytochrome b">
    <location>
        <begin position="1"/>
        <end position="379"/>
    </location>
</feature>
<feature type="transmembrane region" description="Helical" evidence="2">
    <location>
        <begin position="33"/>
        <end position="53"/>
    </location>
</feature>
<feature type="transmembrane region" description="Helical" evidence="2">
    <location>
        <begin position="77"/>
        <end position="98"/>
    </location>
</feature>
<feature type="transmembrane region" description="Helical" evidence="2">
    <location>
        <begin position="113"/>
        <end position="133"/>
    </location>
</feature>
<feature type="transmembrane region" description="Helical" evidence="2">
    <location>
        <begin position="178"/>
        <end position="198"/>
    </location>
</feature>
<feature type="transmembrane region" description="Helical" evidence="2">
    <location>
        <begin position="226"/>
        <end position="246"/>
    </location>
</feature>
<feature type="transmembrane region" description="Helical" evidence="2">
    <location>
        <begin position="288"/>
        <end position="308"/>
    </location>
</feature>
<feature type="transmembrane region" description="Helical" evidence="2">
    <location>
        <begin position="320"/>
        <end position="340"/>
    </location>
</feature>
<feature type="transmembrane region" description="Helical" evidence="2">
    <location>
        <begin position="347"/>
        <end position="367"/>
    </location>
</feature>
<feature type="binding site" description="axial binding residue" evidence="2">
    <location>
        <position position="83"/>
    </location>
    <ligand>
        <name>heme b</name>
        <dbReference type="ChEBI" id="CHEBI:60344"/>
        <label>b562</label>
    </ligand>
    <ligandPart>
        <name>Fe</name>
        <dbReference type="ChEBI" id="CHEBI:18248"/>
    </ligandPart>
</feature>
<feature type="binding site" description="axial binding residue" evidence="2">
    <location>
        <position position="97"/>
    </location>
    <ligand>
        <name>heme b</name>
        <dbReference type="ChEBI" id="CHEBI:60344"/>
        <label>b566</label>
    </ligand>
    <ligandPart>
        <name>Fe</name>
        <dbReference type="ChEBI" id="CHEBI:18248"/>
    </ligandPart>
</feature>
<feature type="binding site" description="axial binding residue" evidence="2">
    <location>
        <position position="182"/>
    </location>
    <ligand>
        <name>heme b</name>
        <dbReference type="ChEBI" id="CHEBI:60344"/>
        <label>b562</label>
    </ligand>
    <ligandPart>
        <name>Fe</name>
        <dbReference type="ChEBI" id="CHEBI:18248"/>
    </ligandPart>
</feature>
<feature type="binding site" description="axial binding residue" evidence="2">
    <location>
        <position position="196"/>
    </location>
    <ligand>
        <name>heme b</name>
        <dbReference type="ChEBI" id="CHEBI:60344"/>
        <label>b566</label>
    </ligand>
    <ligandPart>
        <name>Fe</name>
        <dbReference type="ChEBI" id="CHEBI:18248"/>
    </ligandPart>
</feature>
<feature type="binding site" evidence="2">
    <location>
        <position position="201"/>
    </location>
    <ligand>
        <name>a ubiquinone</name>
        <dbReference type="ChEBI" id="CHEBI:16389"/>
    </ligand>
</feature>
<comment type="function">
    <text evidence="2">Component of the ubiquinol-cytochrome c reductase complex (complex III or cytochrome b-c1 complex) that is part of the mitochondrial respiratory chain. The b-c1 complex mediates electron transfer from ubiquinol to cytochrome c. Contributes to the generation of a proton gradient across the mitochondrial membrane that is then used for ATP synthesis.</text>
</comment>
<comment type="cofactor">
    <cofactor evidence="2">
        <name>heme b</name>
        <dbReference type="ChEBI" id="CHEBI:60344"/>
    </cofactor>
    <text evidence="2">Binds 2 heme b groups non-covalently.</text>
</comment>
<comment type="subunit">
    <text evidence="2">The cytochrome bc1 complex contains 11 subunits: 3 respiratory subunits (MT-CYB, CYC1 and UQCRFS1), 2 core proteins (UQCRC1 and UQCRC2) and 6 low-molecular weight proteins (UQCRH/QCR6, UQCRB/QCR7, UQCRQ/QCR8, UQCR10/QCR9, UQCR11/QCR10 and a cleavage product of UQCRFS1). This cytochrome bc1 complex then forms a dimer.</text>
</comment>
<comment type="subcellular location">
    <subcellularLocation>
        <location evidence="2">Mitochondrion inner membrane</location>
        <topology evidence="2">Multi-pass membrane protein</topology>
    </subcellularLocation>
</comment>
<comment type="miscellaneous">
    <text evidence="1">Heme 1 (or BL or b562) is low-potential and absorbs at about 562 nm, and heme 2 (or BH or b566) is high-potential and absorbs at about 566 nm.</text>
</comment>
<comment type="similarity">
    <text evidence="3 4">Belongs to the cytochrome b family.</text>
</comment>
<comment type="caution">
    <text evidence="2">The full-length protein contains only eight transmembrane helices, not nine as predicted by bioinformatics tools.</text>
</comment>
<dbReference type="EMBL" id="AF143938">
    <property type="protein sequence ID" value="AAD29745.1"/>
    <property type="molecule type" value="Genomic_DNA"/>
</dbReference>
<dbReference type="EMBL" id="AF143937">
    <property type="protein sequence ID" value="AAD29744.1"/>
    <property type="molecule type" value="Genomic_DNA"/>
</dbReference>
<dbReference type="SMR" id="Q9XK52"/>
<dbReference type="GO" id="GO:0005743">
    <property type="term" value="C:mitochondrial inner membrane"/>
    <property type="evidence" value="ECO:0007669"/>
    <property type="project" value="UniProtKB-SubCell"/>
</dbReference>
<dbReference type="GO" id="GO:0045275">
    <property type="term" value="C:respiratory chain complex III"/>
    <property type="evidence" value="ECO:0007669"/>
    <property type="project" value="InterPro"/>
</dbReference>
<dbReference type="GO" id="GO:0046872">
    <property type="term" value="F:metal ion binding"/>
    <property type="evidence" value="ECO:0007669"/>
    <property type="project" value="UniProtKB-KW"/>
</dbReference>
<dbReference type="GO" id="GO:0008121">
    <property type="term" value="F:ubiquinol-cytochrome-c reductase activity"/>
    <property type="evidence" value="ECO:0007669"/>
    <property type="project" value="InterPro"/>
</dbReference>
<dbReference type="GO" id="GO:0006122">
    <property type="term" value="P:mitochondrial electron transport, ubiquinol to cytochrome c"/>
    <property type="evidence" value="ECO:0007669"/>
    <property type="project" value="TreeGrafter"/>
</dbReference>
<dbReference type="CDD" id="cd00290">
    <property type="entry name" value="cytochrome_b_C"/>
    <property type="match status" value="1"/>
</dbReference>
<dbReference type="CDD" id="cd00284">
    <property type="entry name" value="Cytochrome_b_N"/>
    <property type="match status" value="1"/>
</dbReference>
<dbReference type="FunFam" id="1.20.810.10:FF:000002">
    <property type="entry name" value="Cytochrome b"/>
    <property type="match status" value="1"/>
</dbReference>
<dbReference type="Gene3D" id="1.20.810.10">
    <property type="entry name" value="Cytochrome Bc1 Complex, Chain C"/>
    <property type="match status" value="1"/>
</dbReference>
<dbReference type="InterPro" id="IPR005798">
    <property type="entry name" value="Cyt_b/b6_C"/>
</dbReference>
<dbReference type="InterPro" id="IPR036150">
    <property type="entry name" value="Cyt_b/b6_C_sf"/>
</dbReference>
<dbReference type="InterPro" id="IPR005797">
    <property type="entry name" value="Cyt_b/b6_N"/>
</dbReference>
<dbReference type="InterPro" id="IPR027387">
    <property type="entry name" value="Cytb/b6-like_sf"/>
</dbReference>
<dbReference type="InterPro" id="IPR030689">
    <property type="entry name" value="Cytochrome_b"/>
</dbReference>
<dbReference type="InterPro" id="IPR048260">
    <property type="entry name" value="Cytochrome_b_C_euk/bac"/>
</dbReference>
<dbReference type="InterPro" id="IPR048259">
    <property type="entry name" value="Cytochrome_b_N_euk/bac"/>
</dbReference>
<dbReference type="InterPro" id="IPR016174">
    <property type="entry name" value="Di-haem_cyt_TM"/>
</dbReference>
<dbReference type="PANTHER" id="PTHR19271">
    <property type="entry name" value="CYTOCHROME B"/>
    <property type="match status" value="1"/>
</dbReference>
<dbReference type="PANTHER" id="PTHR19271:SF16">
    <property type="entry name" value="CYTOCHROME B"/>
    <property type="match status" value="1"/>
</dbReference>
<dbReference type="Pfam" id="PF00032">
    <property type="entry name" value="Cytochrom_B_C"/>
    <property type="match status" value="1"/>
</dbReference>
<dbReference type="Pfam" id="PF00033">
    <property type="entry name" value="Cytochrome_B"/>
    <property type="match status" value="1"/>
</dbReference>
<dbReference type="PIRSF" id="PIRSF038885">
    <property type="entry name" value="COB"/>
    <property type="match status" value="1"/>
</dbReference>
<dbReference type="SUPFAM" id="SSF81648">
    <property type="entry name" value="a domain/subunit of cytochrome bc1 complex (Ubiquinol-cytochrome c reductase)"/>
    <property type="match status" value="1"/>
</dbReference>
<dbReference type="SUPFAM" id="SSF81342">
    <property type="entry name" value="Transmembrane di-heme cytochromes"/>
    <property type="match status" value="1"/>
</dbReference>
<dbReference type="PROSITE" id="PS51003">
    <property type="entry name" value="CYTB_CTER"/>
    <property type="match status" value="1"/>
</dbReference>
<dbReference type="PROSITE" id="PS51002">
    <property type="entry name" value="CYTB_NTER"/>
    <property type="match status" value="1"/>
</dbReference>
<keyword id="KW-0249">Electron transport</keyword>
<keyword id="KW-0349">Heme</keyword>
<keyword id="KW-0408">Iron</keyword>
<keyword id="KW-0472">Membrane</keyword>
<keyword id="KW-0479">Metal-binding</keyword>
<keyword id="KW-0496">Mitochondrion</keyword>
<keyword id="KW-0999">Mitochondrion inner membrane</keyword>
<keyword id="KW-0679">Respiratory chain</keyword>
<keyword id="KW-0812">Transmembrane</keyword>
<keyword id="KW-1133">Transmembrane helix</keyword>
<keyword id="KW-0813">Transport</keyword>
<keyword id="KW-0830">Ubiquinone</keyword>
<evidence type="ECO:0000250" key="1"/>
<evidence type="ECO:0000250" key="2">
    <source>
        <dbReference type="UniProtKB" id="P00157"/>
    </source>
</evidence>
<evidence type="ECO:0000255" key="3">
    <source>
        <dbReference type="PROSITE-ProRule" id="PRU00967"/>
    </source>
</evidence>
<evidence type="ECO:0000255" key="4">
    <source>
        <dbReference type="PROSITE-ProRule" id="PRU00968"/>
    </source>
</evidence>
<organism>
    <name type="scientific">Marmota sibirica</name>
    <name type="common">Tarbagan marmot</name>
    <dbReference type="NCBI Taxonomy" id="93166"/>
    <lineage>
        <taxon>Eukaryota</taxon>
        <taxon>Metazoa</taxon>
        <taxon>Chordata</taxon>
        <taxon>Craniata</taxon>
        <taxon>Vertebrata</taxon>
        <taxon>Euteleostomi</taxon>
        <taxon>Mammalia</taxon>
        <taxon>Eutheria</taxon>
        <taxon>Euarchontoglires</taxon>
        <taxon>Glires</taxon>
        <taxon>Rodentia</taxon>
        <taxon>Sciuromorpha</taxon>
        <taxon>Sciuridae</taxon>
        <taxon>Xerinae</taxon>
        <taxon>Marmotini</taxon>
        <taxon>Marmota</taxon>
    </lineage>
</organism>
<name>CYB_MARSI</name>
<sequence>MTNTRKTHPLIKIINHSFIDLPAPSNISTWWNFGSLLGLCLAIQILTGLFLAMHYTSDTTTAFSSVTHICRDVNYGWLIRYTHANGASMFFICLFLHVGRGVYYGSYTYFETWNIGVILLLAVMATAFMGYVLPWGQMSFWGATVITNLLSAIPYIGTTLVEWIWGGFSVDKATLTRFFAFHFILPFIIAALVMIHLLFLHETGSNNPSGLISNSDKIPFHPYYTIKDILGVLLLILILMILVLFSPDLLGDPDNYTPANPLSTPLHIKPEWYFLFAYAILRSIPNKLGGVLALVFSILILMLFPLLHLSKQRSMMFRPLSQCMFWILVTDLITLTWIGGQPVEYPYNIIGQLASILYFTIILLILPIISLIENKLLKW</sequence>
<protein>
    <recommendedName>
        <fullName>Cytochrome b</fullName>
    </recommendedName>
    <alternativeName>
        <fullName>Complex III subunit 3</fullName>
    </alternativeName>
    <alternativeName>
        <fullName>Complex III subunit III</fullName>
    </alternativeName>
    <alternativeName>
        <fullName>Cytochrome b-c1 complex subunit 3</fullName>
    </alternativeName>
    <alternativeName>
        <fullName>Ubiquinol-cytochrome-c reductase complex cytochrome b subunit</fullName>
    </alternativeName>
</protein>
<reference key="1">
    <citation type="journal article" date="1999" name="Syst. Biol.">
        <title>Molecular phylogeny of the marmots (Rodentia: Sciuridae): tests of evolutionary and biogeographic hypotheses.</title>
        <authorList>
            <person name="Steppan S.J."/>
            <person name="Akhverdyan M.R."/>
            <person name="Lyapunova E.A."/>
            <person name="Fraser D.G."/>
            <person name="Vorontsov N.N."/>
            <person name="Hoffmann R.S."/>
            <person name="Braun M.J."/>
        </authorList>
    </citation>
    <scope>NUCLEOTIDE SEQUENCE [GENOMIC DNA]</scope>
</reference>
<proteinExistence type="inferred from homology"/>
<accession>Q9XK52</accession>
<geneLocation type="mitochondrion"/>
<gene>
    <name type="primary">MT-CYB</name>
    <name type="synonym">COB</name>
    <name type="synonym">CYTB</name>
    <name type="synonym">MTCYB</name>
</gene>